<dbReference type="EMBL" id="AY327042">
    <property type="protein sequence ID" value="AAP92127.1"/>
    <property type="molecule type" value="mRNA"/>
</dbReference>
<dbReference type="EMBL" id="DP000010">
    <property type="protein sequence ID" value="ABA91217.1"/>
    <property type="molecule type" value="Genomic_DNA"/>
</dbReference>
<dbReference type="EMBL" id="AP008217">
    <property type="status" value="NOT_ANNOTATED_CDS"/>
    <property type="molecule type" value="Genomic_DNA"/>
</dbReference>
<dbReference type="EMBL" id="AP014967">
    <property type="protein sequence ID" value="BAT12406.1"/>
    <property type="molecule type" value="Genomic_DNA"/>
</dbReference>
<dbReference type="RefSeq" id="XP_015615471.1">
    <property type="nucleotide sequence ID" value="XM_015759985.1"/>
</dbReference>
<dbReference type="SMR" id="Q7XJ39"/>
<dbReference type="FunCoup" id="Q7XJ39">
    <property type="interactions" value="603"/>
</dbReference>
<dbReference type="STRING" id="39947.Q7XJ39"/>
<dbReference type="Allergome" id="2788">
    <property type="allergen name" value="Ory s 14"/>
</dbReference>
<dbReference type="PaxDb" id="39947-Q7XJ39"/>
<dbReference type="EnsemblPlants" id="Os11t0115350-01">
    <property type="protein sequence ID" value="Os11t0115350-01"/>
    <property type="gene ID" value="Os11g0115350"/>
</dbReference>
<dbReference type="Gramene" id="Os11t0115350-01">
    <property type="protein sequence ID" value="Os11t0115350-01"/>
    <property type="gene ID" value="Os11g0115350"/>
</dbReference>
<dbReference type="eggNOG" id="ENOG502S4CI">
    <property type="taxonomic scope" value="Eukaryota"/>
</dbReference>
<dbReference type="HOGENOM" id="CLU_128423_0_0_1"/>
<dbReference type="InParanoid" id="Q7XJ39"/>
<dbReference type="OMA" id="CLIFACM"/>
<dbReference type="OrthoDB" id="770678at2759"/>
<dbReference type="Proteomes" id="UP000000763">
    <property type="component" value="Chromosome 11"/>
</dbReference>
<dbReference type="Proteomes" id="UP000059680">
    <property type="component" value="Chromosome 11"/>
</dbReference>
<dbReference type="ExpressionAtlas" id="Q7XJ39">
    <property type="expression patterns" value="baseline and differential"/>
</dbReference>
<dbReference type="GO" id="GO:0008289">
    <property type="term" value="F:lipid binding"/>
    <property type="evidence" value="ECO:0007669"/>
    <property type="project" value="UniProtKB-KW"/>
</dbReference>
<dbReference type="GO" id="GO:0006869">
    <property type="term" value="P:lipid transport"/>
    <property type="evidence" value="ECO:0007669"/>
    <property type="project" value="InterPro"/>
</dbReference>
<dbReference type="CDD" id="cd01960">
    <property type="entry name" value="nsLTP1"/>
    <property type="match status" value="1"/>
</dbReference>
<dbReference type="Gene3D" id="1.10.110.10">
    <property type="entry name" value="Plant lipid-transfer and hydrophobic proteins"/>
    <property type="match status" value="1"/>
</dbReference>
<dbReference type="InterPro" id="IPR036312">
    <property type="entry name" value="Bifun_inhib/LTP/seed_sf"/>
</dbReference>
<dbReference type="InterPro" id="IPR016140">
    <property type="entry name" value="Bifunc_inhib/LTP/seed_store"/>
</dbReference>
<dbReference type="InterPro" id="IPR000528">
    <property type="entry name" value="Plant_nsLTP"/>
</dbReference>
<dbReference type="PANTHER" id="PTHR33076">
    <property type="entry name" value="NON-SPECIFIC LIPID-TRANSFER PROTEIN 2-RELATED"/>
    <property type="match status" value="1"/>
</dbReference>
<dbReference type="Pfam" id="PF00234">
    <property type="entry name" value="Tryp_alpha_amyl"/>
    <property type="match status" value="1"/>
</dbReference>
<dbReference type="PRINTS" id="PR00382">
    <property type="entry name" value="LIPIDTRNSFER"/>
</dbReference>
<dbReference type="SMART" id="SM00499">
    <property type="entry name" value="AAI"/>
    <property type="match status" value="1"/>
</dbReference>
<dbReference type="SUPFAM" id="SSF47699">
    <property type="entry name" value="Bifunctional inhibitor/lipid-transfer protein/seed storage 2S albumin"/>
    <property type="match status" value="1"/>
</dbReference>
<dbReference type="PROSITE" id="PS00597">
    <property type="entry name" value="PLANT_LTP"/>
    <property type="match status" value="1"/>
</dbReference>
<accession>Q7XJ39</accession>
<accession>O22483</accession>
<accession>Q2RBD4</accession>
<accession>Q42978</accession>
<accession>Q42999</accession>
<evidence type="ECO:0000250" key="1"/>
<evidence type="ECO:0000255" key="2"/>
<evidence type="ECO:0000305" key="3"/>
<name>NLT2A_ORYSJ</name>
<comment type="function">
    <text>Plant non-specific lipid-transfer proteins transfer phospholipids as well as galactolipids across membranes. May play a role in wax or cutin deposition in the cell walls of expanding epidermal cells and certain secretory tissues.</text>
</comment>
<comment type="similarity">
    <text evidence="3">Belongs to the plant LTP family.</text>
</comment>
<proteinExistence type="inferred from homology"/>
<keyword id="KW-1015">Disulfide bond</keyword>
<keyword id="KW-0446">Lipid-binding</keyword>
<keyword id="KW-1185">Reference proteome</keyword>
<keyword id="KW-0732">Signal</keyword>
<keyword id="KW-0813">Transport</keyword>
<gene>
    <name type="primary">LTP2-A</name>
    <name type="ordered locus">Os11g0115350</name>
    <name type="ordered locus">LOC_Os11g02369</name>
</gene>
<protein>
    <recommendedName>
        <fullName>Non-specific lipid-transfer protein 2A</fullName>
        <shortName>LTP 2A</shortName>
    </recommendedName>
</protein>
<organism>
    <name type="scientific">Oryza sativa subsp. japonica</name>
    <name type="common">Rice</name>
    <dbReference type="NCBI Taxonomy" id="39947"/>
    <lineage>
        <taxon>Eukaryota</taxon>
        <taxon>Viridiplantae</taxon>
        <taxon>Streptophyta</taxon>
        <taxon>Embryophyta</taxon>
        <taxon>Tracheophyta</taxon>
        <taxon>Spermatophyta</taxon>
        <taxon>Magnoliopsida</taxon>
        <taxon>Liliopsida</taxon>
        <taxon>Poales</taxon>
        <taxon>Poaceae</taxon>
        <taxon>BOP clade</taxon>
        <taxon>Oryzoideae</taxon>
        <taxon>Oryzeae</taxon>
        <taxon>Oryzinae</taxon>
        <taxon>Oryza</taxon>
        <taxon>Oryza sativa</taxon>
    </lineage>
</organism>
<reference key="1">
    <citation type="submission" date="2003-06" db="EMBL/GenBank/DDBJ databases">
        <title>Induction of rice cDNA encoding a lipid transfer protein during the disease resistance response.</title>
        <authorList>
            <person name="Quanhong Y."/>
            <person name="Rihe P."/>
            <person name="Aisheng X."/>
        </authorList>
    </citation>
    <scope>NUCLEOTIDE SEQUENCE [MRNA]</scope>
</reference>
<reference key="2">
    <citation type="journal article" date="2005" name="BMC Biol.">
        <title>The sequence of rice chromosomes 11 and 12, rich in disease resistance genes and recent gene duplications.</title>
        <authorList>
            <consortium name="The rice chromosomes 11 and 12 sequencing consortia"/>
        </authorList>
    </citation>
    <scope>NUCLEOTIDE SEQUENCE [LARGE SCALE GENOMIC DNA]</scope>
    <source>
        <strain>cv. Nipponbare</strain>
    </source>
</reference>
<reference key="3">
    <citation type="journal article" date="2005" name="Nature">
        <title>The map-based sequence of the rice genome.</title>
        <authorList>
            <consortium name="International rice genome sequencing project (IRGSP)"/>
        </authorList>
    </citation>
    <scope>NUCLEOTIDE SEQUENCE [LARGE SCALE GENOMIC DNA]</scope>
    <source>
        <strain>cv. Nipponbare</strain>
    </source>
</reference>
<reference key="4">
    <citation type="journal article" date="2008" name="Nucleic Acids Res.">
        <title>The rice annotation project database (RAP-DB): 2008 update.</title>
        <authorList>
            <consortium name="The rice annotation project (RAP)"/>
        </authorList>
    </citation>
    <scope>GENOME REANNOTATION</scope>
    <source>
        <strain>cv. Nipponbare</strain>
    </source>
</reference>
<reference key="5">
    <citation type="journal article" date="2013" name="Rice">
        <title>Improvement of the Oryza sativa Nipponbare reference genome using next generation sequence and optical map data.</title>
        <authorList>
            <person name="Kawahara Y."/>
            <person name="de la Bastide M."/>
            <person name="Hamilton J.P."/>
            <person name="Kanamori H."/>
            <person name="McCombie W.R."/>
            <person name="Ouyang S."/>
            <person name="Schwartz D.C."/>
            <person name="Tanaka T."/>
            <person name="Wu J."/>
            <person name="Zhou S."/>
            <person name="Childs K.L."/>
            <person name="Davidson R.M."/>
            <person name="Lin H."/>
            <person name="Quesada-Ocampo L."/>
            <person name="Vaillancourt B."/>
            <person name="Sakai H."/>
            <person name="Lee S.S."/>
            <person name="Kim J."/>
            <person name="Numa H."/>
            <person name="Itoh T."/>
            <person name="Buell C.R."/>
            <person name="Matsumoto T."/>
        </authorList>
    </citation>
    <scope>GENOME REANNOTATION</scope>
    <source>
        <strain>cv. Nipponbare</strain>
    </source>
</reference>
<sequence length="118" mass="11501">MARAQLVLVALVAAALLLAGPHTTMAAISCGQVNSAVSPCLSYARGGSGPSAACCSGVRSLNSAASTTADRRTACNCLKNVAGSISGLNAGNAASIPSKCGVSIPYTISPSIDCSSVN</sequence>
<feature type="signal peptide" evidence="2">
    <location>
        <begin position="1"/>
        <end position="26"/>
    </location>
</feature>
<feature type="chain" id="PRO_0000018392" description="Non-specific lipid-transfer protein 2A">
    <location>
        <begin position="27"/>
        <end position="118"/>
    </location>
</feature>
<feature type="disulfide bond" evidence="1">
    <location>
        <begin position="30"/>
        <end position="77"/>
    </location>
</feature>
<feature type="disulfide bond" evidence="1">
    <location>
        <begin position="40"/>
        <end position="54"/>
    </location>
</feature>
<feature type="disulfide bond" evidence="1">
    <location>
        <begin position="55"/>
        <end position="100"/>
    </location>
</feature>
<feature type="disulfide bond" evidence="1">
    <location>
        <begin position="75"/>
        <end position="114"/>
    </location>
</feature>
<feature type="sequence conflict" description="In Ref. 1; AAP92127." evidence="3" ref="1">
    <original>GSG</original>
    <variation>LR</variation>
    <location>
        <begin position="47"/>
        <end position="49"/>
    </location>
</feature>
<feature type="sequence conflict" description="In Ref. 1; AAP92127." evidence="3" ref="1">
    <original>SVN</original>
    <variation>REL</variation>
    <location>
        <begin position="116"/>
        <end position="118"/>
    </location>
</feature>